<evidence type="ECO:0000250" key="1">
    <source>
        <dbReference type="UniProtKB" id="Q9BZD4"/>
    </source>
</evidence>
<evidence type="ECO:0000255" key="2"/>
<evidence type="ECO:0000256" key="3">
    <source>
        <dbReference type="SAM" id="MobiDB-lite"/>
    </source>
</evidence>
<evidence type="ECO:0000269" key="4">
    <source>
    </source>
</evidence>
<evidence type="ECO:0000269" key="5">
    <source>
    </source>
</evidence>
<evidence type="ECO:0000269" key="6">
    <source>
    </source>
</evidence>
<evidence type="ECO:0000305" key="7"/>
<feature type="chain" id="PRO_0000249818" description="Kinetochore protein Nuf2-A">
    <location>
        <begin position="1"/>
        <end position="462"/>
    </location>
</feature>
<feature type="region of interest" description="Disordered" evidence="3">
    <location>
        <begin position="239"/>
        <end position="259"/>
    </location>
</feature>
<feature type="coiled-coil region" evidence="2">
    <location>
        <begin position="143"/>
        <end position="277"/>
    </location>
</feature>
<feature type="coiled-coil region" evidence="2">
    <location>
        <begin position="308"/>
        <end position="461"/>
    </location>
</feature>
<feature type="compositionally biased region" description="Basic and acidic residues" evidence="3">
    <location>
        <begin position="248"/>
        <end position="259"/>
    </location>
</feature>
<name>NUF2A_XENLA</name>
<accession>Q8AWF4</accession>
<keyword id="KW-0131">Cell cycle</keyword>
<keyword id="KW-0132">Cell division</keyword>
<keyword id="KW-0137">Centromere</keyword>
<keyword id="KW-0158">Chromosome</keyword>
<keyword id="KW-0175">Coiled coil</keyword>
<keyword id="KW-0995">Kinetochore</keyword>
<keyword id="KW-0498">Mitosis</keyword>
<keyword id="KW-0539">Nucleus</keyword>
<keyword id="KW-1185">Reference proteome</keyword>
<comment type="function">
    <text evidence="1 4">Acts as a component of the essential kinetochore-associated NDC80 complex, which is required for chromosome segregation and spindle checkpoint activity (PubMed:12514103). Required for kinetochore integrity and the organization of stable microtubule binding sites in the outer plate of the kinetochore (By similarity). The NDC80 complex synergistically enhances the affinity of the SKA1 complex for microtubules and may allow the NDC80 complex to track depolymerizing microtubules (By similarity).</text>
</comment>
<comment type="subunit">
    <text evidence="4 5 6">Component of the NDC80 complex, which is composed of ndc80, cdca1, spbc24 and spbc25. The NDC80 complex interacts with mis12 and zwint.</text>
</comment>
<comment type="interaction">
    <interactant intactId="EBI-1000342">
        <id>Q8AWF4</id>
    </interactant>
    <interactant intactId="EBI-1000337">
        <id>Q8AWF5</id>
        <label>ndc80</label>
    </interactant>
    <organismsDiffer>false</organismsDiffer>
    <experiments>8</experiments>
</comment>
<comment type="subcellular location">
    <subcellularLocation>
        <location>Nucleus</location>
    </subcellularLocation>
    <subcellularLocation>
        <location>Chromosome</location>
        <location>Centromere</location>
        <location>Kinetochore</location>
    </subcellularLocation>
    <text>Localizes to kinetochores from late prophase to anaphase.</text>
</comment>
<comment type="similarity">
    <text evidence="7">Belongs to the NUF2 family.</text>
</comment>
<reference key="1">
    <citation type="journal article" date="2003" name="Genes Dev.">
        <title>The highly conserved Ndc80 complex is required for kinetochore assembly, chromosome congression, and spindle checkpoint activity.</title>
        <authorList>
            <person name="McCleland M.L."/>
            <person name="Gardner R.D."/>
            <person name="Kallio M.J."/>
            <person name="Daum J.R."/>
            <person name="Gorbsky G.J."/>
            <person name="Burke D.J."/>
            <person name="Stukenberg P.T."/>
        </authorList>
    </citation>
    <scope>NUCLEOTIDE SEQUENCE [MRNA]</scope>
    <scope>FUNCTION</scope>
    <scope>INTERACTION WITH NDC80</scope>
    <scope>SUBCELLULAR LOCATION</scope>
</reference>
<reference key="2">
    <citation type="journal article" date="2004" name="Curr. Biol.">
        <title>The vertebrate Ndc80 complex contains Spc24 and Spc25 homologs, which are required to establish and maintain kinetochore-microtubule attachment.</title>
        <authorList>
            <person name="McCleland M.L."/>
            <person name="Kallio M.J."/>
            <person name="Barrett-Wilt G.A."/>
            <person name="Kestner C.A."/>
            <person name="Shabanowitz J."/>
            <person name="Hunt D.F."/>
            <person name="Gorbsky G.J."/>
            <person name="Stukenberg P.T."/>
        </authorList>
    </citation>
    <scope>IDENTIFICATION BY MASS SPECTROMETRY</scope>
    <scope>IDENTIFICATION IN THE NDC80 COMPLEX</scope>
</reference>
<reference key="3">
    <citation type="journal article" date="2005" name="Mol. Biol. Cell">
        <title>Measuring the stoichiometry and physical interactions between components elucidates the architecture of the vertebrate kinetochore.</title>
        <authorList>
            <person name="Emanuele M.J."/>
            <person name="McCleland M.L."/>
            <person name="Satinover D.L."/>
            <person name="Stukenberg P.T."/>
        </authorList>
    </citation>
    <scope>CHARACTERIZATION OF THE NDC80 COMPLEX</scope>
    <scope>INTERACTION OF THE NDC80 COMPLEX WITH MIS12 AND ZWINT</scope>
    <scope>SUBCELLULAR LOCATION</scope>
</reference>
<protein>
    <recommendedName>
        <fullName>Kinetochore protein Nuf2-A</fullName>
        <shortName>xNuf2</shortName>
    </recommendedName>
    <alternativeName>
        <fullName>Cell division cycle-associated protein 1-A</fullName>
    </alternativeName>
</protein>
<dbReference type="EMBL" id="AY168014">
    <property type="protein sequence ID" value="AAN87032.1"/>
    <property type="molecule type" value="mRNA"/>
</dbReference>
<dbReference type="RefSeq" id="NP_001082370.1">
    <property type="nucleotide sequence ID" value="NM_001088901.1"/>
</dbReference>
<dbReference type="RefSeq" id="XP_018112035.1">
    <property type="nucleotide sequence ID" value="XM_018256546.1"/>
</dbReference>
<dbReference type="SMR" id="Q8AWF4"/>
<dbReference type="IntAct" id="Q8AWF4">
    <property type="interactions" value="5"/>
</dbReference>
<dbReference type="GeneID" id="398428"/>
<dbReference type="KEGG" id="xla:398428"/>
<dbReference type="AGR" id="Xenbase:XB-GENE-1001444"/>
<dbReference type="CTD" id="398428"/>
<dbReference type="Xenbase" id="XB-GENE-1001444">
    <property type="gene designation" value="nuf2.L"/>
</dbReference>
<dbReference type="OMA" id="YLKMEAH"/>
<dbReference type="OrthoDB" id="8194677at2759"/>
<dbReference type="Proteomes" id="UP000186698">
    <property type="component" value="Chromosome 4L"/>
</dbReference>
<dbReference type="Bgee" id="398428">
    <property type="expression patterns" value="Expressed in testis and 18 other cell types or tissues"/>
</dbReference>
<dbReference type="GO" id="GO:0031262">
    <property type="term" value="C:Ndc80 complex"/>
    <property type="evidence" value="ECO:0000250"/>
    <property type="project" value="UniProtKB"/>
</dbReference>
<dbReference type="GO" id="GO:0005634">
    <property type="term" value="C:nucleus"/>
    <property type="evidence" value="ECO:0007669"/>
    <property type="project" value="UniProtKB-SubCell"/>
</dbReference>
<dbReference type="GO" id="GO:0044877">
    <property type="term" value="F:protein-containing complex binding"/>
    <property type="evidence" value="ECO:0007669"/>
    <property type="project" value="TreeGrafter"/>
</dbReference>
<dbReference type="GO" id="GO:0051315">
    <property type="term" value="P:attachment of mitotic spindle microtubules to kinetochore"/>
    <property type="evidence" value="ECO:0007669"/>
    <property type="project" value="TreeGrafter"/>
</dbReference>
<dbReference type="GO" id="GO:0051301">
    <property type="term" value="P:cell division"/>
    <property type="evidence" value="ECO:0007669"/>
    <property type="project" value="UniProtKB-KW"/>
</dbReference>
<dbReference type="GO" id="GO:0051383">
    <property type="term" value="P:kinetochore organization"/>
    <property type="evidence" value="ECO:0007669"/>
    <property type="project" value="TreeGrafter"/>
</dbReference>
<dbReference type="GO" id="GO:0045132">
    <property type="term" value="P:meiotic chromosome segregation"/>
    <property type="evidence" value="ECO:0007669"/>
    <property type="project" value="TreeGrafter"/>
</dbReference>
<dbReference type="GO" id="GO:0007052">
    <property type="term" value="P:mitotic spindle organization"/>
    <property type="evidence" value="ECO:0007669"/>
    <property type="project" value="TreeGrafter"/>
</dbReference>
<dbReference type="Gene3D" id="1.10.418.60">
    <property type="entry name" value="Ncd80 complex, Nuf2 subunit"/>
    <property type="match status" value="1"/>
</dbReference>
<dbReference type="InterPro" id="IPR005549">
    <property type="entry name" value="Kinetochore_Nuf2_N"/>
</dbReference>
<dbReference type="InterPro" id="IPR038275">
    <property type="entry name" value="Nuf2_N_sf"/>
</dbReference>
<dbReference type="PANTHER" id="PTHR21650:SF2">
    <property type="entry name" value="KINETOCHORE PROTEIN NUF2"/>
    <property type="match status" value="1"/>
</dbReference>
<dbReference type="PANTHER" id="PTHR21650">
    <property type="entry name" value="MEMBRALIN/KINETOCHORE PROTEIN NUF2"/>
    <property type="match status" value="1"/>
</dbReference>
<dbReference type="Pfam" id="PF03800">
    <property type="entry name" value="Nuf2"/>
    <property type="match status" value="1"/>
</dbReference>
<proteinExistence type="evidence at protein level"/>
<gene>
    <name type="primary">nuf2-a</name>
    <name type="synonym">cdca1-a</name>
</gene>
<organism>
    <name type="scientific">Xenopus laevis</name>
    <name type="common">African clawed frog</name>
    <dbReference type="NCBI Taxonomy" id="8355"/>
    <lineage>
        <taxon>Eukaryota</taxon>
        <taxon>Metazoa</taxon>
        <taxon>Chordata</taxon>
        <taxon>Craniata</taxon>
        <taxon>Vertebrata</taxon>
        <taxon>Euteleostomi</taxon>
        <taxon>Amphibia</taxon>
        <taxon>Batrachia</taxon>
        <taxon>Anura</taxon>
        <taxon>Pipoidea</taxon>
        <taxon>Pipidae</taxon>
        <taxon>Xenopodinae</taxon>
        <taxon>Xenopus</taxon>
        <taxon>Xenopus</taxon>
    </lineage>
</organism>
<sequence length="462" mass="54453">MDKLTFPIFPAADLVNFFRQNILTGTEAKNFNKNDIFPNPKPEMVQKLYMRILQQVFNYGVEQFYMVPMDLDIQYPHLVEGFAPVANILKLMARFLPMCRVYDFHPSDVLNPKGKRTLHSLSGIVNFLHFSATRKEVYFEYCSSYKSALENVRQLQKANQEAEIKIEKLTTVPPEQQAEFKALSSEIHDLQQIISQEYRAKDVAFQEKIAQRKTEFAEKNKRLNEQKLAIATMKEEQERMKSQIVESPEQRKSKTERMKETVHRLKQARQETNDKCDYYRDRVAFACMWQTDVQGYLKKLQGIDTNLEIHRKIREEIRHSEEQVVNLNLELKSLSNEDAQLKRIILVKKEKLAKVDIKNKKKQEDFNQQKQEILEVCSRIQEKRQVVHGRVAQVLQEIQQTIGKKEQLLETTEAGKKKCQEVITDFRAALEKYHDSLQKASERSADRRREKIAELNRRLSRR</sequence>